<comment type="function">
    <text evidence="1">Part of the ABC transporter complex LolCDE involved in the translocation of mature outer membrane-directed lipoproteins, from the inner membrane to the periplasmic chaperone, LolA. Responsible for the formation of the LolA-lipoprotein complex in an ATP-dependent manner.</text>
</comment>
<comment type="subunit">
    <text evidence="1">The complex is composed of two ATP-binding proteins (LolD) and two transmembrane proteins (LolC and LolE).</text>
</comment>
<comment type="subcellular location">
    <subcellularLocation>
        <location evidence="1">Cell inner membrane</location>
        <topology evidence="1">Peripheral membrane protein</topology>
    </subcellularLocation>
</comment>
<comment type="similarity">
    <text evidence="1">Belongs to the ABC transporter superfamily. Lipoprotein translocase (TC 3.A.1.125) family.</text>
</comment>
<evidence type="ECO:0000255" key="1">
    <source>
        <dbReference type="HAMAP-Rule" id="MF_01708"/>
    </source>
</evidence>
<organism>
    <name type="scientific">Psychrobacter arcticus (strain DSM 17307 / VKM B-2377 / 273-4)</name>
    <dbReference type="NCBI Taxonomy" id="259536"/>
    <lineage>
        <taxon>Bacteria</taxon>
        <taxon>Pseudomonadati</taxon>
        <taxon>Pseudomonadota</taxon>
        <taxon>Gammaproteobacteria</taxon>
        <taxon>Moraxellales</taxon>
        <taxon>Moraxellaceae</taxon>
        <taxon>Psychrobacter</taxon>
    </lineage>
</organism>
<feature type="chain" id="PRO_0000272128" description="Lipoprotein-releasing system ATP-binding protein LolD">
    <location>
        <begin position="1"/>
        <end position="226"/>
    </location>
</feature>
<feature type="domain" description="ABC transporter" evidence="1">
    <location>
        <begin position="5"/>
        <end position="226"/>
    </location>
</feature>
<feature type="binding site" evidence="1">
    <location>
        <begin position="41"/>
        <end position="48"/>
    </location>
    <ligand>
        <name>ATP</name>
        <dbReference type="ChEBI" id="CHEBI:30616"/>
    </ligand>
</feature>
<proteinExistence type="inferred from homology"/>
<gene>
    <name evidence="1" type="primary">lolD</name>
    <name type="ordered locus">Psyc_0782</name>
</gene>
<keyword id="KW-0067">ATP-binding</keyword>
<keyword id="KW-0997">Cell inner membrane</keyword>
<keyword id="KW-1003">Cell membrane</keyword>
<keyword id="KW-0472">Membrane</keyword>
<keyword id="KW-0547">Nucleotide-binding</keyword>
<keyword id="KW-1185">Reference proteome</keyword>
<keyword id="KW-1278">Translocase</keyword>
<keyword id="KW-0813">Transport</keyword>
<reference key="1">
    <citation type="journal article" date="2010" name="Appl. Environ. Microbiol.">
        <title>The genome sequence of Psychrobacter arcticus 273-4, a psychroactive Siberian permafrost bacterium, reveals mechanisms for adaptation to low-temperature growth.</title>
        <authorList>
            <person name="Ayala-del-Rio H.L."/>
            <person name="Chain P.S."/>
            <person name="Grzymski J.J."/>
            <person name="Ponder M.A."/>
            <person name="Ivanova N."/>
            <person name="Bergholz P.W."/>
            <person name="Di Bartolo G."/>
            <person name="Hauser L."/>
            <person name="Land M."/>
            <person name="Bakermans C."/>
            <person name="Rodrigues D."/>
            <person name="Klappenbach J."/>
            <person name="Zarka D."/>
            <person name="Larimer F."/>
            <person name="Richardson P."/>
            <person name="Murray A."/>
            <person name="Thomashow M."/>
            <person name="Tiedje J.M."/>
        </authorList>
    </citation>
    <scope>NUCLEOTIDE SEQUENCE [LARGE SCALE GENOMIC DNA]</scope>
    <source>
        <strain>DSM 17307 / VKM B-2377 / 273-4</strain>
    </source>
</reference>
<sequence>MSAILKATNINKIYDEGAVSTQVLTGLDLTVNAGERIAIVGTSGSGKSTLLHLLGGLDTPTSGEVWLHGQLLNSMNETERGAMRNKHLGFIYQFHHLLAEFTAVENVAMPLLMRSEVSTAEARQQAIDILNSVGLEHRLAHRPGELSGGERQRVAIARALVTKPSLILADEPTGNLDYDNAQSVFGLLSELQSTMQTALLMVTHDRNLAALADRQLLLRNGHWENY</sequence>
<accession>Q4FTM3</accession>
<dbReference type="EC" id="7.6.2.-" evidence="1"/>
<dbReference type="EMBL" id="CP000082">
    <property type="protein sequence ID" value="AAZ18635.1"/>
    <property type="molecule type" value="Genomic_DNA"/>
</dbReference>
<dbReference type="RefSeq" id="WP_011280062.1">
    <property type="nucleotide sequence ID" value="NC_007204.1"/>
</dbReference>
<dbReference type="SMR" id="Q4FTM3"/>
<dbReference type="STRING" id="259536.Psyc_0782"/>
<dbReference type="KEGG" id="par:Psyc_0782"/>
<dbReference type="eggNOG" id="COG1136">
    <property type="taxonomic scope" value="Bacteria"/>
</dbReference>
<dbReference type="HOGENOM" id="CLU_000604_1_22_6"/>
<dbReference type="OrthoDB" id="9801477at2"/>
<dbReference type="Proteomes" id="UP000000546">
    <property type="component" value="Chromosome"/>
</dbReference>
<dbReference type="GO" id="GO:0005886">
    <property type="term" value="C:plasma membrane"/>
    <property type="evidence" value="ECO:0007669"/>
    <property type="project" value="UniProtKB-SubCell"/>
</dbReference>
<dbReference type="GO" id="GO:0005524">
    <property type="term" value="F:ATP binding"/>
    <property type="evidence" value="ECO:0007669"/>
    <property type="project" value="UniProtKB-KW"/>
</dbReference>
<dbReference type="GO" id="GO:0016887">
    <property type="term" value="F:ATP hydrolysis activity"/>
    <property type="evidence" value="ECO:0007669"/>
    <property type="project" value="InterPro"/>
</dbReference>
<dbReference type="GO" id="GO:0022857">
    <property type="term" value="F:transmembrane transporter activity"/>
    <property type="evidence" value="ECO:0007669"/>
    <property type="project" value="TreeGrafter"/>
</dbReference>
<dbReference type="GO" id="GO:0044874">
    <property type="term" value="P:lipoprotein localization to outer membrane"/>
    <property type="evidence" value="ECO:0007669"/>
    <property type="project" value="TreeGrafter"/>
</dbReference>
<dbReference type="GO" id="GO:0089705">
    <property type="term" value="P:protein localization to outer membrane"/>
    <property type="evidence" value="ECO:0007669"/>
    <property type="project" value="TreeGrafter"/>
</dbReference>
<dbReference type="CDD" id="cd03255">
    <property type="entry name" value="ABC_MJ0796_LolCDE_FtsE"/>
    <property type="match status" value="1"/>
</dbReference>
<dbReference type="FunFam" id="3.40.50.300:FF:000230">
    <property type="entry name" value="Lipoprotein-releasing system ATP-binding protein LolD"/>
    <property type="match status" value="1"/>
</dbReference>
<dbReference type="Gene3D" id="3.40.50.300">
    <property type="entry name" value="P-loop containing nucleotide triphosphate hydrolases"/>
    <property type="match status" value="1"/>
</dbReference>
<dbReference type="InterPro" id="IPR003593">
    <property type="entry name" value="AAA+_ATPase"/>
</dbReference>
<dbReference type="InterPro" id="IPR003439">
    <property type="entry name" value="ABC_transporter-like_ATP-bd"/>
</dbReference>
<dbReference type="InterPro" id="IPR017871">
    <property type="entry name" value="ABC_transporter-like_CS"/>
</dbReference>
<dbReference type="InterPro" id="IPR015854">
    <property type="entry name" value="ABC_transpr_LolD-like"/>
</dbReference>
<dbReference type="InterPro" id="IPR011924">
    <property type="entry name" value="LolD_lipo_ATP-bd"/>
</dbReference>
<dbReference type="InterPro" id="IPR017911">
    <property type="entry name" value="MacB-like_ATP-bd"/>
</dbReference>
<dbReference type="InterPro" id="IPR027417">
    <property type="entry name" value="P-loop_NTPase"/>
</dbReference>
<dbReference type="NCBIfam" id="TIGR02211">
    <property type="entry name" value="LolD_lipo_ex"/>
    <property type="match status" value="1"/>
</dbReference>
<dbReference type="PANTHER" id="PTHR24220">
    <property type="entry name" value="IMPORT ATP-BINDING PROTEIN"/>
    <property type="match status" value="1"/>
</dbReference>
<dbReference type="PANTHER" id="PTHR24220:SF689">
    <property type="entry name" value="LIPOPROTEIN-RELEASING SYSTEM ATP-BINDING PROTEIN LOLD"/>
    <property type="match status" value="1"/>
</dbReference>
<dbReference type="Pfam" id="PF00005">
    <property type="entry name" value="ABC_tran"/>
    <property type="match status" value="1"/>
</dbReference>
<dbReference type="SMART" id="SM00382">
    <property type="entry name" value="AAA"/>
    <property type="match status" value="1"/>
</dbReference>
<dbReference type="SUPFAM" id="SSF52540">
    <property type="entry name" value="P-loop containing nucleoside triphosphate hydrolases"/>
    <property type="match status" value="1"/>
</dbReference>
<dbReference type="PROSITE" id="PS00211">
    <property type="entry name" value="ABC_TRANSPORTER_1"/>
    <property type="match status" value="1"/>
</dbReference>
<dbReference type="PROSITE" id="PS50893">
    <property type="entry name" value="ABC_TRANSPORTER_2"/>
    <property type="match status" value="1"/>
</dbReference>
<dbReference type="PROSITE" id="PS51244">
    <property type="entry name" value="LOLD"/>
    <property type="match status" value="1"/>
</dbReference>
<protein>
    <recommendedName>
        <fullName evidence="1">Lipoprotein-releasing system ATP-binding protein LolD</fullName>
        <ecNumber evidence="1">7.6.2.-</ecNumber>
    </recommendedName>
</protein>
<name>LOLD_PSYA2</name>